<comment type="function">
    <text evidence="1">Catalyzes the reversible oxidation of malate to oxaloacetate.</text>
</comment>
<comment type="catalytic activity">
    <reaction evidence="1">
        <text>(S)-malate + NAD(+) = oxaloacetate + NADH + H(+)</text>
        <dbReference type="Rhea" id="RHEA:21432"/>
        <dbReference type="ChEBI" id="CHEBI:15378"/>
        <dbReference type="ChEBI" id="CHEBI:15589"/>
        <dbReference type="ChEBI" id="CHEBI:16452"/>
        <dbReference type="ChEBI" id="CHEBI:57540"/>
        <dbReference type="ChEBI" id="CHEBI:57945"/>
        <dbReference type="EC" id="1.1.1.37"/>
    </reaction>
</comment>
<comment type="similarity">
    <text evidence="1">Belongs to the LDH/MDH superfamily. MDH type 3 family.</text>
</comment>
<name>MDH1_RHOPB</name>
<feature type="chain" id="PRO_0000241962" description="Malate dehydrogenase 1">
    <location>
        <begin position="1"/>
        <end position="322"/>
    </location>
</feature>
<feature type="active site" description="Proton acceptor" evidence="1">
    <location>
        <position position="176"/>
    </location>
</feature>
<feature type="binding site" evidence="1">
    <location>
        <begin position="10"/>
        <end position="15"/>
    </location>
    <ligand>
        <name>NAD(+)</name>
        <dbReference type="ChEBI" id="CHEBI:57540"/>
    </ligand>
</feature>
<feature type="binding site" evidence="1">
    <location>
        <position position="34"/>
    </location>
    <ligand>
        <name>NAD(+)</name>
        <dbReference type="ChEBI" id="CHEBI:57540"/>
    </ligand>
</feature>
<feature type="binding site" evidence="1">
    <location>
        <position position="83"/>
    </location>
    <ligand>
        <name>substrate</name>
    </ligand>
</feature>
<feature type="binding site" evidence="1">
    <location>
        <position position="89"/>
    </location>
    <ligand>
        <name>substrate</name>
    </ligand>
</feature>
<feature type="binding site" evidence="1">
    <location>
        <position position="96"/>
    </location>
    <ligand>
        <name>NAD(+)</name>
        <dbReference type="ChEBI" id="CHEBI:57540"/>
    </ligand>
</feature>
<feature type="binding site" evidence="1">
    <location>
        <begin position="119"/>
        <end position="121"/>
    </location>
    <ligand>
        <name>NAD(+)</name>
        <dbReference type="ChEBI" id="CHEBI:57540"/>
    </ligand>
</feature>
<feature type="binding site" evidence="1">
    <location>
        <position position="121"/>
    </location>
    <ligand>
        <name>substrate</name>
    </ligand>
</feature>
<feature type="binding site" evidence="1">
    <location>
        <position position="152"/>
    </location>
    <ligand>
        <name>substrate</name>
    </ligand>
</feature>
<proteinExistence type="inferred from homology"/>
<gene>
    <name evidence="1" type="primary">mdh1</name>
    <name type="ordered locus">RPC_0194</name>
</gene>
<evidence type="ECO:0000255" key="1">
    <source>
        <dbReference type="HAMAP-Rule" id="MF_00487"/>
    </source>
</evidence>
<organism>
    <name type="scientific">Rhodopseudomonas palustris (strain BisB18)</name>
    <dbReference type="NCBI Taxonomy" id="316056"/>
    <lineage>
        <taxon>Bacteria</taxon>
        <taxon>Pseudomonadati</taxon>
        <taxon>Pseudomonadota</taxon>
        <taxon>Alphaproteobacteria</taxon>
        <taxon>Hyphomicrobiales</taxon>
        <taxon>Nitrobacteraceae</taxon>
        <taxon>Rhodopseudomonas</taxon>
    </lineage>
</organism>
<sequence length="322" mass="34161">MARDKIALIGSGQIGGTLAHLVGLKELGDVVMFDIAEGIPQGKSLDIAQSSPVDGFDAKFTGANSYEAIEGARVVIVTAGVPRKPGMSRDDLLSINLKVMEQVGAGIKKYAPDAFVICITNPLDAMVWALQKASGLPHRKVVGMAGVLDSARFRYFLADEFNVSVEDVTAFVLGGHGDTMVPLVKYSTVAGIPLPDLVKMGWTSQARLDEIVDRTRNGGAEIVNLLKTGSAFYAPAASAIAMAESYLKDKKRVVPVAAYLNGEYGVKDMYVGVPVVIGDKGVERIVEIELAGKDREAFDKSVAAVQGLVEACKKIAPELLGH</sequence>
<keyword id="KW-0520">NAD</keyword>
<keyword id="KW-0560">Oxidoreductase</keyword>
<keyword id="KW-0816">Tricarboxylic acid cycle</keyword>
<protein>
    <recommendedName>
        <fullName evidence="1">Malate dehydrogenase 1</fullName>
        <ecNumber evidence="1">1.1.1.37</ecNumber>
    </recommendedName>
</protein>
<reference key="1">
    <citation type="submission" date="2006-03" db="EMBL/GenBank/DDBJ databases">
        <title>Complete sequence of Rhodopseudomonas palustris BisB18.</title>
        <authorList>
            <consortium name="US DOE Joint Genome Institute"/>
            <person name="Copeland A."/>
            <person name="Lucas S."/>
            <person name="Lapidus A."/>
            <person name="Barry K."/>
            <person name="Detter J.C."/>
            <person name="Glavina del Rio T."/>
            <person name="Hammon N."/>
            <person name="Israni S."/>
            <person name="Dalin E."/>
            <person name="Tice H."/>
            <person name="Pitluck S."/>
            <person name="Chain P."/>
            <person name="Malfatti S."/>
            <person name="Shin M."/>
            <person name="Vergez L."/>
            <person name="Schmutz J."/>
            <person name="Larimer F."/>
            <person name="Land M."/>
            <person name="Hauser L."/>
            <person name="Pelletier D.A."/>
            <person name="Kyrpides N."/>
            <person name="Anderson I."/>
            <person name="Oda Y."/>
            <person name="Harwood C.S."/>
            <person name="Richardson P."/>
        </authorList>
    </citation>
    <scope>NUCLEOTIDE SEQUENCE [LARGE SCALE GENOMIC DNA]</scope>
    <source>
        <strain>BisB18</strain>
    </source>
</reference>
<accession>Q21CW7</accession>
<dbReference type="EC" id="1.1.1.37" evidence="1"/>
<dbReference type="EMBL" id="CP000301">
    <property type="protein sequence ID" value="ABD85769.1"/>
    <property type="molecule type" value="Genomic_DNA"/>
</dbReference>
<dbReference type="SMR" id="Q21CW7"/>
<dbReference type="STRING" id="316056.RPC_0194"/>
<dbReference type="KEGG" id="rpc:RPC_0194"/>
<dbReference type="eggNOG" id="COG0039">
    <property type="taxonomic scope" value="Bacteria"/>
</dbReference>
<dbReference type="HOGENOM" id="CLU_045401_2_1_5"/>
<dbReference type="OrthoDB" id="9802969at2"/>
<dbReference type="GO" id="GO:0004459">
    <property type="term" value="F:L-lactate dehydrogenase activity"/>
    <property type="evidence" value="ECO:0007669"/>
    <property type="project" value="TreeGrafter"/>
</dbReference>
<dbReference type="GO" id="GO:0030060">
    <property type="term" value="F:L-malate dehydrogenase (NAD+) activity"/>
    <property type="evidence" value="ECO:0007669"/>
    <property type="project" value="UniProtKB-UniRule"/>
</dbReference>
<dbReference type="GO" id="GO:0006089">
    <property type="term" value="P:lactate metabolic process"/>
    <property type="evidence" value="ECO:0007669"/>
    <property type="project" value="TreeGrafter"/>
</dbReference>
<dbReference type="GO" id="GO:0006099">
    <property type="term" value="P:tricarboxylic acid cycle"/>
    <property type="evidence" value="ECO:0007669"/>
    <property type="project" value="UniProtKB-UniRule"/>
</dbReference>
<dbReference type="CDD" id="cd01339">
    <property type="entry name" value="LDH-like_MDH"/>
    <property type="match status" value="1"/>
</dbReference>
<dbReference type="FunFam" id="3.40.50.720:FF:000018">
    <property type="entry name" value="Malate dehydrogenase"/>
    <property type="match status" value="1"/>
</dbReference>
<dbReference type="FunFam" id="3.90.110.10:FF:000004">
    <property type="entry name" value="Malate dehydrogenase"/>
    <property type="match status" value="1"/>
</dbReference>
<dbReference type="Gene3D" id="3.90.110.10">
    <property type="entry name" value="Lactate dehydrogenase/glycoside hydrolase, family 4, C-terminal"/>
    <property type="match status" value="1"/>
</dbReference>
<dbReference type="Gene3D" id="3.40.50.720">
    <property type="entry name" value="NAD(P)-binding Rossmann-like Domain"/>
    <property type="match status" value="1"/>
</dbReference>
<dbReference type="HAMAP" id="MF_00487">
    <property type="entry name" value="Malate_dehydrog_3"/>
    <property type="match status" value="1"/>
</dbReference>
<dbReference type="InterPro" id="IPR001557">
    <property type="entry name" value="L-lactate/malate_DH"/>
</dbReference>
<dbReference type="InterPro" id="IPR022383">
    <property type="entry name" value="Lactate/malate_DH_C"/>
</dbReference>
<dbReference type="InterPro" id="IPR001236">
    <property type="entry name" value="Lactate/malate_DH_N"/>
</dbReference>
<dbReference type="InterPro" id="IPR015955">
    <property type="entry name" value="Lactate_DH/Glyco_Ohase_4_C"/>
</dbReference>
<dbReference type="InterPro" id="IPR011275">
    <property type="entry name" value="Malate_DH_type3"/>
</dbReference>
<dbReference type="InterPro" id="IPR036291">
    <property type="entry name" value="NAD(P)-bd_dom_sf"/>
</dbReference>
<dbReference type="NCBIfam" id="TIGR01763">
    <property type="entry name" value="MalateDH_bact"/>
    <property type="match status" value="1"/>
</dbReference>
<dbReference type="NCBIfam" id="NF004863">
    <property type="entry name" value="PRK06223.1"/>
    <property type="match status" value="1"/>
</dbReference>
<dbReference type="PANTHER" id="PTHR43128">
    <property type="entry name" value="L-2-HYDROXYCARBOXYLATE DEHYDROGENASE (NAD(P)(+))"/>
    <property type="match status" value="1"/>
</dbReference>
<dbReference type="PANTHER" id="PTHR43128:SF16">
    <property type="entry name" value="L-LACTATE DEHYDROGENASE"/>
    <property type="match status" value="1"/>
</dbReference>
<dbReference type="Pfam" id="PF02866">
    <property type="entry name" value="Ldh_1_C"/>
    <property type="match status" value="1"/>
</dbReference>
<dbReference type="Pfam" id="PF00056">
    <property type="entry name" value="Ldh_1_N"/>
    <property type="match status" value="1"/>
</dbReference>
<dbReference type="PIRSF" id="PIRSF000102">
    <property type="entry name" value="Lac_mal_DH"/>
    <property type="match status" value="1"/>
</dbReference>
<dbReference type="PRINTS" id="PR00086">
    <property type="entry name" value="LLDHDRGNASE"/>
</dbReference>
<dbReference type="SUPFAM" id="SSF56327">
    <property type="entry name" value="LDH C-terminal domain-like"/>
    <property type="match status" value="1"/>
</dbReference>
<dbReference type="SUPFAM" id="SSF51735">
    <property type="entry name" value="NAD(P)-binding Rossmann-fold domains"/>
    <property type="match status" value="1"/>
</dbReference>